<dbReference type="EC" id="2.1.1.182" evidence="1"/>
<dbReference type="EMBL" id="AM946015">
    <property type="protein sequence ID" value="CAR43508.1"/>
    <property type="molecule type" value="Genomic_DNA"/>
</dbReference>
<dbReference type="RefSeq" id="WP_015911942.1">
    <property type="nucleotide sequence ID" value="NC_012004.1"/>
</dbReference>
<dbReference type="SMR" id="B9DVT4"/>
<dbReference type="STRING" id="218495.SUB1644"/>
<dbReference type="KEGG" id="sub:SUB1644"/>
<dbReference type="eggNOG" id="COG0030">
    <property type="taxonomic scope" value="Bacteria"/>
</dbReference>
<dbReference type="HOGENOM" id="CLU_041220_0_0_9"/>
<dbReference type="OrthoDB" id="9814755at2"/>
<dbReference type="Proteomes" id="UP000000449">
    <property type="component" value="Chromosome"/>
</dbReference>
<dbReference type="GO" id="GO:0005829">
    <property type="term" value="C:cytosol"/>
    <property type="evidence" value="ECO:0007669"/>
    <property type="project" value="TreeGrafter"/>
</dbReference>
<dbReference type="GO" id="GO:0052908">
    <property type="term" value="F:16S rRNA (adenine(1518)-N(6)/adenine(1519)-N(6))-dimethyltransferase activity"/>
    <property type="evidence" value="ECO:0007669"/>
    <property type="project" value="UniProtKB-EC"/>
</dbReference>
<dbReference type="GO" id="GO:0003723">
    <property type="term" value="F:RNA binding"/>
    <property type="evidence" value="ECO:0007669"/>
    <property type="project" value="UniProtKB-KW"/>
</dbReference>
<dbReference type="CDD" id="cd02440">
    <property type="entry name" value="AdoMet_MTases"/>
    <property type="match status" value="1"/>
</dbReference>
<dbReference type="FunFam" id="3.40.50.150:FF:000023">
    <property type="entry name" value="Ribosomal RNA small subunit methyltransferase A"/>
    <property type="match status" value="1"/>
</dbReference>
<dbReference type="Gene3D" id="1.10.8.100">
    <property type="entry name" value="Ribosomal RNA adenine dimethylase-like, domain 2"/>
    <property type="match status" value="1"/>
</dbReference>
<dbReference type="Gene3D" id="3.40.50.150">
    <property type="entry name" value="Vaccinia Virus protein VP39"/>
    <property type="match status" value="1"/>
</dbReference>
<dbReference type="HAMAP" id="MF_00607">
    <property type="entry name" value="16SrRNA_methyltr_A"/>
    <property type="match status" value="1"/>
</dbReference>
<dbReference type="InterPro" id="IPR001737">
    <property type="entry name" value="KsgA/Erm"/>
</dbReference>
<dbReference type="InterPro" id="IPR023165">
    <property type="entry name" value="rRNA_Ade_diMease-like_C"/>
</dbReference>
<dbReference type="InterPro" id="IPR020596">
    <property type="entry name" value="rRNA_Ade_Mease_Trfase_CS"/>
</dbReference>
<dbReference type="InterPro" id="IPR020598">
    <property type="entry name" value="rRNA_Ade_methylase_Trfase_N"/>
</dbReference>
<dbReference type="InterPro" id="IPR011530">
    <property type="entry name" value="rRNA_adenine_dimethylase"/>
</dbReference>
<dbReference type="InterPro" id="IPR029063">
    <property type="entry name" value="SAM-dependent_MTases_sf"/>
</dbReference>
<dbReference type="NCBIfam" id="TIGR00755">
    <property type="entry name" value="ksgA"/>
    <property type="match status" value="1"/>
</dbReference>
<dbReference type="PANTHER" id="PTHR11727">
    <property type="entry name" value="DIMETHYLADENOSINE TRANSFERASE"/>
    <property type="match status" value="1"/>
</dbReference>
<dbReference type="PANTHER" id="PTHR11727:SF7">
    <property type="entry name" value="DIMETHYLADENOSINE TRANSFERASE-RELATED"/>
    <property type="match status" value="1"/>
</dbReference>
<dbReference type="Pfam" id="PF00398">
    <property type="entry name" value="RrnaAD"/>
    <property type="match status" value="1"/>
</dbReference>
<dbReference type="SMART" id="SM00650">
    <property type="entry name" value="rADc"/>
    <property type="match status" value="1"/>
</dbReference>
<dbReference type="SUPFAM" id="SSF53335">
    <property type="entry name" value="S-adenosyl-L-methionine-dependent methyltransferases"/>
    <property type="match status" value="1"/>
</dbReference>
<dbReference type="PROSITE" id="PS01131">
    <property type="entry name" value="RRNA_A_DIMETH"/>
    <property type="match status" value="1"/>
</dbReference>
<dbReference type="PROSITE" id="PS51689">
    <property type="entry name" value="SAM_RNA_A_N6_MT"/>
    <property type="match status" value="1"/>
</dbReference>
<protein>
    <recommendedName>
        <fullName evidence="1">Ribosomal RNA small subunit methyltransferase A</fullName>
        <ecNumber evidence="1">2.1.1.182</ecNumber>
    </recommendedName>
    <alternativeName>
        <fullName evidence="1">16S rRNA (adenine(1518)-N(6)/adenine(1519)-N(6))-dimethyltransferase</fullName>
    </alternativeName>
    <alternativeName>
        <fullName evidence="1">16S rRNA dimethyladenosine transferase</fullName>
    </alternativeName>
    <alternativeName>
        <fullName evidence="1">16S rRNA dimethylase</fullName>
    </alternativeName>
    <alternativeName>
        <fullName evidence="1">S-adenosylmethionine-6-N', N'-adenosyl(rRNA) dimethyltransferase</fullName>
    </alternativeName>
</protein>
<accession>B9DVT4</accession>
<gene>
    <name evidence="1" type="primary">rsmA</name>
    <name evidence="1" type="synonym">ksgA</name>
    <name type="ordered locus">SUB1644</name>
</gene>
<feature type="chain" id="PRO_1000147153" description="Ribosomal RNA small subunit methyltransferase A">
    <location>
        <begin position="1"/>
        <end position="290"/>
    </location>
</feature>
<feature type="binding site" evidence="1">
    <location>
        <position position="27"/>
    </location>
    <ligand>
        <name>S-adenosyl-L-methionine</name>
        <dbReference type="ChEBI" id="CHEBI:59789"/>
    </ligand>
</feature>
<feature type="binding site" evidence="1">
    <location>
        <position position="29"/>
    </location>
    <ligand>
        <name>S-adenosyl-L-methionine</name>
        <dbReference type="ChEBI" id="CHEBI:59789"/>
    </ligand>
</feature>
<feature type="binding site" evidence="1">
    <location>
        <position position="54"/>
    </location>
    <ligand>
        <name>S-adenosyl-L-methionine</name>
        <dbReference type="ChEBI" id="CHEBI:59789"/>
    </ligand>
</feature>
<feature type="binding site" evidence="1">
    <location>
        <position position="75"/>
    </location>
    <ligand>
        <name>S-adenosyl-L-methionine</name>
        <dbReference type="ChEBI" id="CHEBI:59789"/>
    </ligand>
</feature>
<feature type="binding site" evidence="1">
    <location>
        <position position="100"/>
    </location>
    <ligand>
        <name>S-adenosyl-L-methionine</name>
        <dbReference type="ChEBI" id="CHEBI:59789"/>
    </ligand>
</feature>
<feature type="binding site" evidence="1">
    <location>
        <position position="125"/>
    </location>
    <ligand>
        <name>S-adenosyl-L-methionine</name>
        <dbReference type="ChEBI" id="CHEBI:59789"/>
    </ligand>
</feature>
<comment type="function">
    <text evidence="1">Specifically dimethylates two adjacent adenosines (A1518 and A1519) in the loop of a conserved hairpin near the 3'-end of 16S rRNA in the 30S particle. May play a critical role in biogenesis of 30S subunits.</text>
</comment>
<comment type="catalytic activity">
    <reaction evidence="1">
        <text>adenosine(1518)/adenosine(1519) in 16S rRNA + 4 S-adenosyl-L-methionine = N(6)-dimethyladenosine(1518)/N(6)-dimethyladenosine(1519) in 16S rRNA + 4 S-adenosyl-L-homocysteine + 4 H(+)</text>
        <dbReference type="Rhea" id="RHEA:19609"/>
        <dbReference type="Rhea" id="RHEA-COMP:10232"/>
        <dbReference type="Rhea" id="RHEA-COMP:10233"/>
        <dbReference type="ChEBI" id="CHEBI:15378"/>
        <dbReference type="ChEBI" id="CHEBI:57856"/>
        <dbReference type="ChEBI" id="CHEBI:59789"/>
        <dbReference type="ChEBI" id="CHEBI:74411"/>
        <dbReference type="ChEBI" id="CHEBI:74493"/>
        <dbReference type="EC" id="2.1.1.182"/>
    </reaction>
</comment>
<comment type="subcellular location">
    <subcellularLocation>
        <location evidence="1">Cytoplasm</location>
    </subcellularLocation>
</comment>
<comment type="similarity">
    <text evidence="1">Belongs to the class I-like SAM-binding methyltransferase superfamily. rRNA adenine N(6)-methyltransferase family. RsmA subfamily.</text>
</comment>
<name>RSMA_STRU0</name>
<organism>
    <name type="scientific">Streptococcus uberis (strain ATCC BAA-854 / 0140J)</name>
    <dbReference type="NCBI Taxonomy" id="218495"/>
    <lineage>
        <taxon>Bacteria</taxon>
        <taxon>Bacillati</taxon>
        <taxon>Bacillota</taxon>
        <taxon>Bacilli</taxon>
        <taxon>Lactobacillales</taxon>
        <taxon>Streptococcaceae</taxon>
        <taxon>Streptococcus</taxon>
    </lineage>
</organism>
<keyword id="KW-0963">Cytoplasm</keyword>
<keyword id="KW-0489">Methyltransferase</keyword>
<keyword id="KW-1185">Reference proteome</keyword>
<keyword id="KW-0694">RNA-binding</keyword>
<keyword id="KW-0698">rRNA processing</keyword>
<keyword id="KW-0949">S-adenosyl-L-methionine</keyword>
<keyword id="KW-0808">Transferase</keyword>
<sequence length="290" mass="32763">MRIADYSVTRAVLDRHGFTFKKSFGQNFLTDTNILQKIVDTAEIDRSVNVIEIGPGIGALTEFLAENAAEVMAFEIDDRLIPILADTLRDFDNVQVINQDILKSDLQSQIKQFKNPDLPLKVVANLPYYITTPILMHLIESKIPFQEFVVMMQREVADRISAEPNTKAYGSLSIAVQYYMTAKVAFIVPKTVFVPAPNVDSAILKMVRRPEPLIEVTDEDFFFRVAKVGFIHRRKTLWNNLTSHFGKTEEIKTKLTQALELADIKPSIRGEALTIPQYGKLADALKEVGF</sequence>
<evidence type="ECO:0000255" key="1">
    <source>
        <dbReference type="HAMAP-Rule" id="MF_00607"/>
    </source>
</evidence>
<reference key="1">
    <citation type="journal article" date="2009" name="BMC Genomics">
        <title>Evidence for niche adaptation in the genome of the bovine pathogen Streptococcus uberis.</title>
        <authorList>
            <person name="Ward P.N."/>
            <person name="Holden M.T.G."/>
            <person name="Leigh J.A."/>
            <person name="Lennard N."/>
            <person name="Bignell A."/>
            <person name="Barron A."/>
            <person name="Clark L."/>
            <person name="Quail M.A."/>
            <person name="Woodward J."/>
            <person name="Barrell B.G."/>
            <person name="Egan S.A."/>
            <person name="Field T.R."/>
            <person name="Maskell D."/>
            <person name="Kehoe M."/>
            <person name="Dowson C.G."/>
            <person name="Chanter N."/>
            <person name="Whatmore A.M."/>
            <person name="Bentley S.D."/>
            <person name="Parkhill J."/>
        </authorList>
    </citation>
    <scope>NUCLEOTIDE SEQUENCE [LARGE SCALE GENOMIC DNA]</scope>
    <source>
        <strain>ATCC BAA-854 / 0140J</strain>
    </source>
</reference>
<proteinExistence type="inferred from homology"/>